<gene>
    <name evidence="1" type="primary">groEL</name>
    <name evidence="1" type="synonym">groL</name>
    <name type="ordered locus">SYO3AOP1_0586</name>
</gene>
<name>CH60_SULSY</name>
<comment type="function">
    <text evidence="1">Together with its co-chaperonin GroES, plays an essential role in assisting protein folding. The GroEL-GroES system forms a nano-cage that allows encapsulation of the non-native substrate proteins and provides a physical environment optimized to promote and accelerate protein folding.</text>
</comment>
<comment type="catalytic activity">
    <reaction evidence="1">
        <text>ATP + H2O + a folded polypeptide = ADP + phosphate + an unfolded polypeptide.</text>
        <dbReference type="EC" id="5.6.1.7"/>
    </reaction>
</comment>
<comment type="subunit">
    <text evidence="1">Forms a cylinder of 14 subunits composed of two heptameric rings stacked back-to-back. Interacts with the co-chaperonin GroES.</text>
</comment>
<comment type="subcellular location">
    <subcellularLocation>
        <location evidence="1">Cytoplasm</location>
    </subcellularLocation>
</comment>
<comment type="similarity">
    <text evidence="1">Belongs to the chaperonin (HSP60) family.</text>
</comment>
<proteinExistence type="inferred from homology"/>
<feature type="chain" id="PRO_1000130068" description="Chaperonin GroEL">
    <location>
        <begin position="1"/>
        <end position="544"/>
    </location>
</feature>
<feature type="binding site" evidence="1">
    <location>
        <begin position="30"/>
        <end position="33"/>
    </location>
    <ligand>
        <name>ATP</name>
        <dbReference type="ChEBI" id="CHEBI:30616"/>
    </ligand>
</feature>
<feature type="binding site" evidence="1">
    <location>
        <position position="51"/>
    </location>
    <ligand>
        <name>ATP</name>
        <dbReference type="ChEBI" id="CHEBI:30616"/>
    </ligand>
</feature>
<feature type="binding site" evidence="1">
    <location>
        <begin position="87"/>
        <end position="91"/>
    </location>
    <ligand>
        <name>ATP</name>
        <dbReference type="ChEBI" id="CHEBI:30616"/>
    </ligand>
</feature>
<feature type="binding site" evidence="1">
    <location>
        <position position="415"/>
    </location>
    <ligand>
        <name>ATP</name>
        <dbReference type="ChEBI" id="CHEBI:30616"/>
    </ligand>
</feature>
<feature type="binding site" evidence="1">
    <location>
        <begin position="480"/>
        <end position="482"/>
    </location>
    <ligand>
        <name>ATP</name>
        <dbReference type="ChEBI" id="CHEBI:30616"/>
    </ligand>
</feature>
<feature type="binding site" evidence="1">
    <location>
        <position position="496"/>
    </location>
    <ligand>
        <name>ATP</name>
        <dbReference type="ChEBI" id="CHEBI:30616"/>
    </ligand>
</feature>
<reference key="1">
    <citation type="journal article" date="2009" name="J. Bacteriol.">
        <title>Complete and draft genome sequences of six members of the Aquificales.</title>
        <authorList>
            <person name="Reysenbach A.-L."/>
            <person name="Hamamura N."/>
            <person name="Podar M."/>
            <person name="Griffiths E."/>
            <person name="Ferreira S."/>
            <person name="Hochstein R."/>
            <person name="Heidelberg J."/>
            <person name="Johnson J."/>
            <person name="Mead D."/>
            <person name="Pohorille A."/>
            <person name="Sarmiento M."/>
            <person name="Schweighofer K."/>
            <person name="Seshadri R."/>
            <person name="Voytek M.A."/>
        </authorList>
    </citation>
    <scope>NUCLEOTIDE SEQUENCE [LARGE SCALE GENOMIC DNA]</scope>
    <source>
        <strain>YO3AOP1</strain>
    </source>
</reference>
<protein>
    <recommendedName>
        <fullName evidence="1">Chaperonin GroEL</fullName>
        <ecNumber evidence="1">5.6.1.7</ecNumber>
    </recommendedName>
    <alternativeName>
        <fullName evidence="1">60 kDa chaperonin</fullName>
    </alternativeName>
    <alternativeName>
        <fullName evidence="1">Chaperonin-60</fullName>
        <shortName evidence="1">Cpn60</shortName>
    </alternativeName>
</protein>
<keyword id="KW-0067">ATP-binding</keyword>
<keyword id="KW-0143">Chaperone</keyword>
<keyword id="KW-0963">Cytoplasm</keyword>
<keyword id="KW-0413">Isomerase</keyword>
<keyword id="KW-0547">Nucleotide-binding</keyword>
<organism>
    <name type="scientific">Sulfurihydrogenibium sp. (strain YO3AOP1)</name>
    <dbReference type="NCBI Taxonomy" id="436114"/>
    <lineage>
        <taxon>Bacteria</taxon>
        <taxon>Pseudomonadati</taxon>
        <taxon>Aquificota</taxon>
        <taxon>Aquificia</taxon>
        <taxon>Aquificales</taxon>
        <taxon>Hydrogenothermaceae</taxon>
        <taxon>Sulfurihydrogenibium</taxon>
    </lineage>
</organism>
<dbReference type="EC" id="5.6.1.7" evidence="1"/>
<dbReference type="EMBL" id="CP001080">
    <property type="protein sequence ID" value="ACD66224.1"/>
    <property type="molecule type" value="Genomic_DNA"/>
</dbReference>
<dbReference type="RefSeq" id="WP_012459304.1">
    <property type="nucleotide sequence ID" value="NC_010730.1"/>
</dbReference>
<dbReference type="SMR" id="B2V8F1"/>
<dbReference type="STRING" id="436114.SYO3AOP1_0586"/>
<dbReference type="KEGG" id="sul:SYO3AOP1_0586"/>
<dbReference type="eggNOG" id="COG0459">
    <property type="taxonomic scope" value="Bacteria"/>
</dbReference>
<dbReference type="HOGENOM" id="CLU_016503_3_0_0"/>
<dbReference type="GO" id="GO:0005737">
    <property type="term" value="C:cytoplasm"/>
    <property type="evidence" value="ECO:0007669"/>
    <property type="project" value="UniProtKB-SubCell"/>
</dbReference>
<dbReference type="GO" id="GO:0005524">
    <property type="term" value="F:ATP binding"/>
    <property type="evidence" value="ECO:0007669"/>
    <property type="project" value="UniProtKB-UniRule"/>
</dbReference>
<dbReference type="GO" id="GO:0140662">
    <property type="term" value="F:ATP-dependent protein folding chaperone"/>
    <property type="evidence" value="ECO:0007669"/>
    <property type="project" value="InterPro"/>
</dbReference>
<dbReference type="GO" id="GO:0016853">
    <property type="term" value="F:isomerase activity"/>
    <property type="evidence" value="ECO:0007669"/>
    <property type="project" value="UniProtKB-KW"/>
</dbReference>
<dbReference type="GO" id="GO:0051082">
    <property type="term" value="F:unfolded protein binding"/>
    <property type="evidence" value="ECO:0007669"/>
    <property type="project" value="UniProtKB-UniRule"/>
</dbReference>
<dbReference type="GO" id="GO:0042026">
    <property type="term" value="P:protein refolding"/>
    <property type="evidence" value="ECO:0007669"/>
    <property type="project" value="UniProtKB-UniRule"/>
</dbReference>
<dbReference type="CDD" id="cd03344">
    <property type="entry name" value="GroEL"/>
    <property type="match status" value="1"/>
</dbReference>
<dbReference type="FunFam" id="3.50.7.10:FF:000001">
    <property type="entry name" value="60 kDa chaperonin"/>
    <property type="match status" value="1"/>
</dbReference>
<dbReference type="Gene3D" id="3.50.7.10">
    <property type="entry name" value="GroEL"/>
    <property type="match status" value="1"/>
</dbReference>
<dbReference type="Gene3D" id="1.10.560.10">
    <property type="entry name" value="GroEL-like equatorial domain"/>
    <property type="match status" value="1"/>
</dbReference>
<dbReference type="Gene3D" id="3.30.260.10">
    <property type="entry name" value="TCP-1-like chaperonin intermediate domain"/>
    <property type="match status" value="1"/>
</dbReference>
<dbReference type="HAMAP" id="MF_00600">
    <property type="entry name" value="CH60"/>
    <property type="match status" value="1"/>
</dbReference>
<dbReference type="InterPro" id="IPR018370">
    <property type="entry name" value="Chaperonin_Cpn60_CS"/>
</dbReference>
<dbReference type="InterPro" id="IPR001844">
    <property type="entry name" value="Cpn60/GroEL"/>
</dbReference>
<dbReference type="InterPro" id="IPR002423">
    <property type="entry name" value="Cpn60/GroEL/TCP-1"/>
</dbReference>
<dbReference type="InterPro" id="IPR027409">
    <property type="entry name" value="GroEL-like_apical_dom_sf"/>
</dbReference>
<dbReference type="InterPro" id="IPR027413">
    <property type="entry name" value="GROEL-like_equatorial_sf"/>
</dbReference>
<dbReference type="InterPro" id="IPR027410">
    <property type="entry name" value="TCP-1-like_intermed_sf"/>
</dbReference>
<dbReference type="NCBIfam" id="TIGR02348">
    <property type="entry name" value="GroEL"/>
    <property type="match status" value="1"/>
</dbReference>
<dbReference type="NCBIfam" id="NF000592">
    <property type="entry name" value="PRK00013.1"/>
    <property type="match status" value="1"/>
</dbReference>
<dbReference type="NCBIfam" id="NF009487">
    <property type="entry name" value="PRK12849.1"/>
    <property type="match status" value="1"/>
</dbReference>
<dbReference type="NCBIfam" id="NF009488">
    <property type="entry name" value="PRK12850.1"/>
    <property type="match status" value="1"/>
</dbReference>
<dbReference type="NCBIfam" id="NF009489">
    <property type="entry name" value="PRK12851.1"/>
    <property type="match status" value="1"/>
</dbReference>
<dbReference type="PANTHER" id="PTHR45633">
    <property type="entry name" value="60 KDA HEAT SHOCK PROTEIN, MITOCHONDRIAL"/>
    <property type="match status" value="1"/>
</dbReference>
<dbReference type="Pfam" id="PF00118">
    <property type="entry name" value="Cpn60_TCP1"/>
    <property type="match status" value="1"/>
</dbReference>
<dbReference type="PRINTS" id="PR00298">
    <property type="entry name" value="CHAPERONIN60"/>
</dbReference>
<dbReference type="SUPFAM" id="SSF52029">
    <property type="entry name" value="GroEL apical domain-like"/>
    <property type="match status" value="1"/>
</dbReference>
<dbReference type="SUPFAM" id="SSF48592">
    <property type="entry name" value="GroEL equatorial domain-like"/>
    <property type="match status" value="1"/>
</dbReference>
<dbReference type="SUPFAM" id="SSF54849">
    <property type="entry name" value="GroEL-intermediate domain like"/>
    <property type="match status" value="1"/>
</dbReference>
<dbReference type="PROSITE" id="PS00296">
    <property type="entry name" value="CHAPERONINS_CPN60"/>
    <property type="match status" value="1"/>
</dbReference>
<evidence type="ECO:0000255" key="1">
    <source>
        <dbReference type="HAMAP-Rule" id="MF_00600"/>
    </source>
</evidence>
<accession>B2V8F1</accession>
<sequence>MAAKKLVYGDEARAKLKAGVDKLANAVKVTLGPRGREVILEKKWGSPVVTKDGVSVAKEIELTDPYENMAAQLVKEVASKTADVAGDGTTTATVLTQAIYEEGLKAIASGANPIYVKRGIDEAVKIIVEELKKISKPVTGRKEIEQVATISANNDPEIGKIIADAMEKVGKDGVITVEESKSAETVLEVTEGMQFDRGYLSPYFVTNAEKMEAVLENPYILIYEKKVGNIRELLPVLEKVVQTNKPLLIIAEDVEGEALATLVVNHIKGVLRVCAVKAPGFGERRKAMLQDIAILTGGTAITEDLGIKLESVDLDMLGKADKVVVDKDNTTIIGGKGNPEDIKARIEQIKKQIETTTSEYDKEKLQERLAKLAGGVAIIKVGAATEAELKEKKDRVDDAVHATKAAVEEGIVPGGGIAIFRASRALCNIKEENTDKAWGIKIVKNACKVPLKQIAYNAGFEGSVIIEKIKDVDNVNYGFDAATGEYVDMVEAGIIDPTKVVRTALQNAASIAGTMLTAECLVAEIKEKEEKLPGAGGGMGDMDF</sequence>